<proteinExistence type="inferred from homology"/>
<organism>
    <name type="scientific">Bordetella bronchiseptica (strain ATCC BAA-588 / NCTC 13252 / RB50)</name>
    <name type="common">Alcaligenes bronchisepticus</name>
    <dbReference type="NCBI Taxonomy" id="257310"/>
    <lineage>
        <taxon>Bacteria</taxon>
        <taxon>Pseudomonadati</taxon>
        <taxon>Pseudomonadota</taxon>
        <taxon>Betaproteobacteria</taxon>
        <taxon>Burkholderiales</taxon>
        <taxon>Alcaligenaceae</taxon>
        <taxon>Bordetella</taxon>
    </lineage>
</organism>
<evidence type="ECO:0000255" key="1">
    <source>
        <dbReference type="HAMAP-Rule" id="MF_00454"/>
    </source>
</evidence>
<comment type="function">
    <text evidence="1">Fluoride-specific ion channel. Important for reducing fluoride concentration in the cell, thus reducing its toxicity.</text>
</comment>
<comment type="catalytic activity">
    <reaction evidence="1">
        <text>fluoride(in) = fluoride(out)</text>
        <dbReference type="Rhea" id="RHEA:76159"/>
        <dbReference type="ChEBI" id="CHEBI:17051"/>
    </reaction>
    <physiologicalReaction direction="left-to-right" evidence="1">
        <dbReference type="Rhea" id="RHEA:76160"/>
    </physiologicalReaction>
</comment>
<comment type="activity regulation">
    <text evidence="1">Na(+) is not transported, but it plays an essential structural role and its presence is essential for fluoride channel function.</text>
</comment>
<comment type="subcellular location">
    <subcellularLocation>
        <location evidence="1">Cell inner membrane</location>
        <topology evidence="1">Multi-pass membrane protein</topology>
    </subcellularLocation>
</comment>
<comment type="similarity">
    <text evidence="1">Belongs to the fluoride channel Fluc/FEX (TC 1.A.43) family.</text>
</comment>
<protein>
    <recommendedName>
        <fullName evidence="1">Fluoride-specific ion channel FluC</fullName>
    </recommendedName>
</protein>
<gene>
    <name evidence="1" type="primary">fluC</name>
    <name evidence="1" type="synonym">crcB</name>
    <name type="ordered locus">BB3275</name>
</gene>
<reference key="1">
    <citation type="journal article" date="2003" name="Nat. Genet.">
        <title>Comparative analysis of the genome sequences of Bordetella pertussis, Bordetella parapertussis and Bordetella bronchiseptica.</title>
        <authorList>
            <person name="Parkhill J."/>
            <person name="Sebaihia M."/>
            <person name="Preston A."/>
            <person name="Murphy L.D."/>
            <person name="Thomson N.R."/>
            <person name="Harris D.E."/>
            <person name="Holden M.T.G."/>
            <person name="Churcher C.M."/>
            <person name="Bentley S.D."/>
            <person name="Mungall K.L."/>
            <person name="Cerdeno-Tarraga A.-M."/>
            <person name="Temple L."/>
            <person name="James K.D."/>
            <person name="Harris B."/>
            <person name="Quail M.A."/>
            <person name="Achtman M."/>
            <person name="Atkin R."/>
            <person name="Baker S."/>
            <person name="Basham D."/>
            <person name="Bason N."/>
            <person name="Cherevach I."/>
            <person name="Chillingworth T."/>
            <person name="Collins M."/>
            <person name="Cronin A."/>
            <person name="Davis P."/>
            <person name="Doggett J."/>
            <person name="Feltwell T."/>
            <person name="Goble A."/>
            <person name="Hamlin N."/>
            <person name="Hauser H."/>
            <person name="Holroyd S."/>
            <person name="Jagels K."/>
            <person name="Leather S."/>
            <person name="Moule S."/>
            <person name="Norberczak H."/>
            <person name="O'Neil S."/>
            <person name="Ormond D."/>
            <person name="Price C."/>
            <person name="Rabbinowitsch E."/>
            <person name="Rutter S."/>
            <person name="Sanders M."/>
            <person name="Saunders D."/>
            <person name="Seeger K."/>
            <person name="Sharp S."/>
            <person name="Simmonds M."/>
            <person name="Skelton J."/>
            <person name="Squares R."/>
            <person name="Squares S."/>
            <person name="Stevens K."/>
            <person name="Unwin L."/>
            <person name="Whitehead S."/>
            <person name="Barrell B.G."/>
            <person name="Maskell D.J."/>
        </authorList>
    </citation>
    <scope>NUCLEOTIDE SEQUENCE [LARGE SCALE GENOMIC DNA]</scope>
    <source>
        <strain>ATCC BAA-588 / NCTC 13252 / RB50</strain>
    </source>
</reference>
<keyword id="KW-0997">Cell inner membrane</keyword>
<keyword id="KW-1003">Cell membrane</keyword>
<keyword id="KW-0407">Ion channel</keyword>
<keyword id="KW-0406">Ion transport</keyword>
<keyword id="KW-0472">Membrane</keyword>
<keyword id="KW-0479">Metal-binding</keyword>
<keyword id="KW-0915">Sodium</keyword>
<keyword id="KW-0812">Transmembrane</keyword>
<keyword id="KW-1133">Transmembrane helix</keyword>
<keyword id="KW-0813">Transport</keyword>
<accession>Q7WHD3</accession>
<sequence>MLTFAPLNFLAIGVGATLGAWLRWVLGLRLNGAGWPWGTLTANLVGGYLIGVMVALIASHPEWPAWIRLAAVTGFLGGLTTFSTFSAETVDMLERGVYATAAAYAGASLAGSLAMTGLGLATVRLLLR</sequence>
<name>FLUC_BORBR</name>
<dbReference type="EMBL" id="BX640447">
    <property type="protein sequence ID" value="CAE33767.1"/>
    <property type="molecule type" value="Genomic_DNA"/>
</dbReference>
<dbReference type="RefSeq" id="WP_003810483.1">
    <property type="nucleotide sequence ID" value="NC_002927.3"/>
</dbReference>
<dbReference type="SMR" id="Q7WHD3"/>
<dbReference type="GeneID" id="56479388"/>
<dbReference type="KEGG" id="bbr:BB3275"/>
<dbReference type="eggNOG" id="COG0239">
    <property type="taxonomic scope" value="Bacteria"/>
</dbReference>
<dbReference type="HOGENOM" id="CLU_114342_3_3_4"/>
<dbReference type="Proteomes" id="UP000001027">
    <property type="component" value="Chromosome"/>
</dbReference>
<dbReference type="GO" id="GO:0005886">
    <property type="term" value="C:plasma membrane"/>
    <property type="evidence" value="ECO:0007669"/>
    <property type="project" value="UniProtKB-SubCell"/>
</dbReference>
<dbReference type="GO" id="GO:0062054">
    <property type="term" value="F:fluoride channel activity"/>
    <property type="evidence" value="ECO:0007669"/>
    <property type="project" value="UniProtKB-UniRule"/>
</dbReference>
<dbReference type="GO" id="GO:0046872">
    <property type="term" value="F:metal ion binding"/>
    <property type="evidence" value="ECO:0007669"/>
    <property type="project" value="UniProtKB-KW"/>
</dbReference>
<dbReference type="GO" id="GO:0140114">
    <property type="term" value="P:cellular detoxification of fluoride"/>
    <property type="evidence" value="ECO:0007669"/>
    <property type="project" value="UniProtKB-UniRule"/>
</dbReference>
<dbReference type="HAMAP" id="MF_00454">
    <property type="entry name" value="FluC"/>
    <property type="match status" value="1"/>
</dbReference>
<dbReference type="InterPro" id="IPR003691">
    <property type="entry name" value="FluC"/>
</dbReference>
<dbReference type="NCBIfam" id="TIGR00494">
    <property type="entry name" value="crcB"/>
    <property type="match status" value="1"/>
</dbReference>
<dbReference type="NCBIfam" id="NF010792">
    <property type="entry name" value="PRK14196.1"/>
    <property type="match status" value="1"/>
</dbReference>
<dbReference type="PANTHER" id="PTHR28259">
    <property type="entry name" value="FLUORIDE EXPORT PROTEIN 1-RELATED"/>
    <property type="match status" value="1"/>
</dbReference>
<dbReference type="PANTHER" id="PTHR28259:SF1">
    <property type="entry name" value="FLUORIDE EXPORT PROTEIN 1-RELATED"/>
    <property type="match status" value="1"/>
</dbReference>
<dbReference type="Pfam" id="PF02537">
    <property type="entry name" value="CRCB"/>
    <property type="match status" value="1"/>
</dbReference>
<feature type="chain" id="PRO_0000110062" description="Fluoride-specific ion channel FluC">
    <location>
        <begin position="1"/>
        <end position="128"/>
    </location>
</feature>
<feature type="transmembrane region" description="Helical" evidence="1">
    <location>
        <begin position="2"/>
        <end position="22"/>
    </location>
</feature>
<feature type="transmembrane region" description="Helical" evidence="1">
    <location>
        <begin position="37"/>
        <end position="57"/>
    </location>
</feature>
<feature type="transmembrane region" description="Helical" evidence="1">
    <location>
        <begin position="65"/>
        <end position="85"/>
    </location>
</feature>
<feature type="transmembrane region" description="Helical" evidence="1">
    <location>
        <begin position="101"/>
        <end position="121"/>
    </location>
</feature>
<feature type="binding site" evidence="1">
    <location>
        <position position="77"/>
    </location>
    <ligand>
        <name>Na(+)</name>
        <dbReference type="ChEBI" id="CHEBI:29101"/>
        <note>structural</note>
    </ligand>
</feature>
<feature type="binding site" evidence="1">
    <location>
        <position position="80"/>
    </location>
    <ligand>
        <name>Na(+)</name>
        <dbReference type="ChEBI" id="CHEBI:29101"/>
        <note>structural</note>
    </ligand>
</feature>